<reference key="1">
    <citation type="journal article" date="2001" name="Cancer Immun.">
        <title>Humoral immunity to human breast cancer: antigen definition and quantitative analysis of mRNA expression.</title>
        <authorList>
            <person name="Scanlan M.J."/>
            <person name="Gout I."/>
            <person name="Gordon C.M."/>
            <person name="Williamson B."/>
            <person name="Stockert E."/>
            <person name="Gure A.O."/>
            <person name="Jaeger D."/>
            <person name="Chen Y.-T."/>
            <person name="Mackay A."/>
            <person name="O'Hare M.J."/>
            <person name="Old L.J."/>
        </authorList>
    </citation>
    <scope>NUCLEOTIDE SEQUENCE [MRNA]</scope>
    <scope>TISSUE SPECIFICITY</scope>
    <scope>VARIANT ALA-10</scope>
    <source>
        <tissue>Mammary gland</tissue>
    </source>
</reference>
<reference key="2">
    <citation type="journal article" date="2002" name="J. Biol. Chem.">
        <title>KEPI, a PKC-dependent protein phosphatase 1 inhibitor regulated by morphine.</title>
        <authorList>
            <person name="Liu Q.-R."/>
            <person name="Zhang P.-W."/>
            <person name="Zhen Q."/>
            <person name="Walther D."/>
            <person name="Wang X.-B."/>
            <person name="Uhl G."/>
        </authorList>
    </citation>
    <scope>NUCLEOTIDE SEQUENCE [MRNA]</scope>
</reference>
<reference key="3">
    <citation type="journal article" date="2003" name="Nature">
        <title>The DNA sequence and analysis of human chromosome 6.</title>
        <authorList>
            <person name="Mungall A.J."/>
            <person name="Palmer S.A."/>
            <person name="Sims S.K."/>
            <person name="Edwards C.A."/>
            <person name="Ashurst J.L."/>
            <person name="Wilming L."/>
            <person name="Jones M.C."/>
            <person name="Horton R."/>
            <person name="Hunt S.E."/>
            <person name="Scott C.E."/>
            <person name="Gilbert J.G.R."/>
            <person name="Clamp M.E."/>
            <person name="Bethel G."/>
            <person name="Milne S."/>
            <person name="Ainscough R."/>
            <person name="Almeida J.P."/>
            <person name="Ambrose K.D."/>
            <person name="Andrews T.D."/>
            <person name="Ashwell R.I.S."/>
            <person name="Babbage A.K."/>
            <person name="Bagguley C.L."/>
            <person name="Bailey J."/>
            <person name="Banerjee R."/>
            <person name="Barker D.J."/>
            <person name="Barlow K.F."/>
            <person name="Bates K."/>
            <person name="Beare D.M."/>
            <person name="Beasley H."/>
            <person name="Beasley O."/>
            <person name="Bird C.P."/>
            <person name="Blakey S.E."/>
            <person name="Bray-Allen S."/>
            <person name="Brook J."/>
            <person name="Brown A.J."/>
            <person name="Brown J.Y."/>
            <person name="Burford D.C."/>
            <person name="Burrill W."/>
            <person name="Burton J."/>
            <person name="Carder C."/>
            <person name="Carter N.P."/>
            <person name="Chapman J.C."/>
            <person name="Clark S.Y."/>
            <person name="Clark G."/>
            <person name="Clee C.M."/>
            <person name="Clegg S."/>
            <person name="Cobley V."/>
            <person name="Collier R.E."/>
            <person name="Collins J.E."/>
            <person name="Colman L.K."/>
            <person name="Corby N.R."/>
            <person name="Coville G.J."/>
            <person name="Culley K.M."/>
            <person name="Dhami P."/>
            <person name="Davies J."/>
            <person name="Dunn M."/>
            <person name="Earthrowl M.E."/>
            <person name="Ellington A.E."/>
            <person name="Evans K.A."/>
            <person name="Faulkner L."/>
            <person name="Francis M.D."/>
            <person name="Frankish A."/>
            <person name="Frankland J."/>
            <person name="French L."/>
            <person name="Garner P."/>
            <person name="Garnett J."/>
            <person name="Ghori M.J."/>
            <person name="Gilby L.M."/>
            <person name="Gillson C.J."/>
            <person name="Glithero R.J."/>
            <person name="Grafham D.V."/>
            <person name="Grant M."/>
            <person name="Gribble S."/>
            <person name="Griffiths C."/>
            <person name="Griffiths M.N.D."/>
            <person name="Hall R."/>
            <person name="Halls K.S."/>
            <person name="Hammond S."/>
            <person name="Harley J.L."/>
            <person name="Hart E.A."/>
            <person name="Heath P.D."/>
            <person name="Heathcott R."/>
            <person name="Holmes S.J."/>
            <person name="Howden P.J."/>
            <person name="Howe K.L."/>
            <person name="Howell G.R."/>
            <person name="Huckle E."/>
            <person name="Humphray S.J."/>
            <person name="Humphries M.D."/>
            <person name="Hunt A.R."/>
            <person name="Johnson C.M."/>
            <person name="Joy A.A."/>
            <person name="Kay M."/>
            <person name="Keenan S.J."/>
            <person name="Kimberley A.M."/>
            <person name="King A."/>
            <person name="Laird G.K."/>
            <person name="Langford C."/>
            <person name="Lawlor S."/>
            <person name="Leongamornlert D.A."/>
            <person name="Leversha M."/>
            <person name="Lloyd C.R."/>
            <person name="Lloyd D.M."/>
            <person name="Loveland J.E."/>
            <person name="Lovell J."/>
            <person name="Martin S."/>
            <person name="Mashreghi-Mohammadi M."/>
            <person name="Maslen G.L."/>
            <person name="Matthews L."/>
            <person name="McCann O.T."/>
            <person name="McLaren S.J."/>
            <person name="McLay K."/>
            <person name="McMurray A."/>
            <person name="Moore M.J.F."/>
            <person name="Mullikin J.C."/>
            <person name="Niblett D."/>
            <person name="Nickerson T."/>
            <person name="Novik K.L."/>
            <person name="Oliver K."/>
            <person name="Overton-Larty E.K."/>
            <person name="Parker A."/>
            <person name="Patel R."/>
            <person name="Pearce A.V."/>
            <person name="Peck A.I."/>
            <person name="Phillimore B.J.C.T."/>
            <person name="Phillips S."/>
            <person name="Plumb R.W."/>
            <person name="Porter K.M."/>
            <person name="Ramsey Y."/>
            <person name="Ranby S.A."/>
            <person name="Rice C.M."/>
            <person name="Ross M.T."/>
            <person name="Searle S.M."/>
            <person name="Sehra H.K."/>
            <person name="Sheridan E."/>
            <person name="Skuce C.D."/>
            <person name="Smith S."/>
            <person name="Smith M."/>
            <person name="Spraggon L."/>
            <person name="Squares S.L."/>
            <person name="Steward C.A."/>
            <person name="Sycamore N."/>
            <person name="Tamlyn-Hall G."/>
            <person name="Tester J."/>
            <person name="Theaker A.J."/>
            <person name="Thomas D.W."/>
            <person name="Thorpe A."/>
            <person name="Tracey A."/>
            <person name="Tromans A."/>
            <person name="Tubby B."/>
            <person name="Wall M."/>
            <person name="Wallis J.M."/>
            <person name="West A.P."/>
            <person name="White S.S."/>
            <person name="Whitehead S.L."/>
            <person name="Whittaker H."/>
            <person name="Wild A."/>
            <person name="Willey D.J."/>
            <person name="Wilmer T.E."/>
            <person name="Wood J.M."/>
            <person name="Wray P.W."/>
            <person name="Wyatt J.C."/>
            <person name="Young L."/>
            <person name="Younger R.M."/>
            <person name="Bentley D.R."/>
            <person name="Coulson A."/>
            <person name="Durbin R.M."/>
            <person name="Hubbard T."/>
            <person name="Sulston J.E."/>
            <person name="Dunham I."/>
            <person name="Rogers J."/>
            <person name="Beck S."/>
        </authorList>
    </citation>
    <scope>NUCLEOTIDE SEQUENCE [LARGE SCALE GENOMIC DNA]</scope>
</reference>
<reference key="4">
    <citation type="journal article" date="2004" name="Genome Res.">
        <title>The status, quality, and expansion of the NIH full-length cDNA project: the Mammalian Gene Collection (MGC).</title>
        <authorList>
            <consortium name="The MGC Project Team"/>
        </authorList>
    </citation>
    <scope>NUCLEOTIDE SEQUENCE [LARGE SCALE MRNA]</scope>
    <scope>VARIANT ALA-10</scope>
    <source>
        <tissue>Skin</tissue>
    </source>
</reference>
<reference key="5">
    <citation type="journal article" date="2003" name="Biochem. Biophys. Res. Commun.">
        <title>Phosphorylation of protein phosphatase type-1 inhibitory proteins by integrin-linked kinase and cyclic nucleotide-dependent protein kinases.</title>
        <authorList>
            <person name="Erdodi F."/>
            <person name="Kiss E."/>
            <person name="Walsh M.P."/>
            <person name="Stefansson B."/>
            <person name="Deng J.T."/>
            <person name="Eto M."/>
            <person name="Brautigan D.L."/>
            <person name="Hartshorne D.J."/>
        </authorList>
    </citation>
    <scope>PHOSPHORYLATION AT THR-73</scope>
</reference>
<reference key="6">
    <citation type="journal article" date="2009" name="Anal. Chem.">
        <title>Lys-N and trypsin cover complementary parts of the phosphoproteome in a refined SCX-based approach.</title>
        <authorList>
            <person name="Gauci S."/>
            <person name="Helbig A.O."/>
            <person name="Slijper M."/>
            <person name="Krijgsveld J."/>
            <person name="Heck A.J."/>
            <person name="Mohammed S."/>
        </authorList>
    </citation>
    <scope>ACETYLATION [LARGE SCALE ANALYSIS] AT SER-2</scope>
    <scope>CLEAVAGE OF INITIATOR METHIONINE [LARGE SCALE ANALYSIS]</scope>
    <scope>IDENTIFICATION BY MASS SPECTROMETRY [LARGE SCALE ANALYSIS]</scope>
</reference>
<reference key="7">
    <citation type="journal article" date="2011" name="BMC Syst. Biol.">
        <title>Initial characterization of the human central proteome.</title>
        <authorList>
            <person name="Burkard T.R."/>
            <person name="Planyavsky M."/>
            <person name="Kaupe I."/>
            <person name="Breitwieser F.P."/>
            <person name="Buerckstuemmer T."/>
            <person name="Bennett K.L."/>
            <person name="Superti-Furga G."/>
            <person name="Colinge J."/>
        </authorList>
    </citation>
    <scope>IDENTIFICATION BY MASS SPECTROMETRY [LARGE SCALE ANALYSIS]</scope>
</reference>
<reference key="8">
    <citation type="journal article" date="2012" name="Proc. Natl. Acad. Sci. U.S.A.">
        <title>N-terminal acetylome analyses and functional insights of the N-terminal acetyltransferase NatB.</title>
        <authorList>
            <person name="Van Damme P."/>
            <person name="Lasa M."/>
            <person name="Polevoda B."/>
            <person name="Gazquez C."/>
            <person name="Elosegui-Artola A."/>
            <person name="Kim D.S."/>
            <person name="De Juan-Pardo E."/>
            <person name="Demeyer K."/>
            <person name="Hole K."/>
            <person name="Larrea E."/>
            <person name="Timmerman E."/>
            <person name="Prieto J."/>
            <person name="Arnesen T."/>
            <person name="Sherman F."/>
            <person name="Gevaert K."/>
            <person name="Aldabe R."/>
        </authorList>
    </citation>
    <scope>ACETYLATION [LARGE SCALE ANALYSIS] AT SER-2</scope>
    <scope>CLEAVAGE OF INITIATOR METHIONINE [LARGE SCALE ANALYSIS]</scope>
    <scope>IDENTIFICATION BY MASS SPECTROMETRY [LARGE SCALE ANALYSIS]</scope>
</reference>
<reference key="9">
    <citation type="journal article" date="2013" name="J. Proteome Res.">
        <title>Toward a comprehensive characterization of a human cancer cell phosphoproteome.</title>
        <authorList>
            <person name="Zhou H."/>
            <person name="Di Palma S."/>
            <person name="Preisinger C."/>
            <person name="Peng M."/>
            <person name="Polat A.N."/>
            <person name="Heck A.J."/>
            <person name="Mohammed S."/>
        </authorList>
    </citation>
    <scope>PHOSPHORYLATION [LARGE SCALE ANALYSIS] AT SER-25 AND SER-33</scope>
    <scope>IDENTIFICATION BY MASS SPECTROMETRY [LARGE SCALE ANALYSIS]</scope>
    <source>
        <tissue>Erythroleukemia</tissue>
    </source>
</reference>
<keyword id="KW-0007">Acetylation</keyword>
<keyword id="KW-0963">Cytoplasm</keyword>
<keyword id="KW-0472">Membrane</keyword>
<keyword id="KW-0488">Methylation</keyword>
<keyword id="KW-0597">Phosphoprotein</keyword>
<keyword id="KW-0650">Protein phosphatase inhibitor</keyword>
<keyword id="KW-1267">Proteomics identification</keyword>
<keyword id="KW-1185">Reference proteome</keyword>
<accession>Q8TAE6</accession>
<accession>Q5VY83</accession>
<accession>Q96BB1</accession>
<accession>Q9H277</accession>
<gene>
    <name type="primary">PPP1R14C</name>
    <name type="synonym">KEPI</name>
</gene>
<feature type="initiator methionine" description="Removed" evidence="8 9">
    <location>
        <position position="1"/>
    </location>
</feature>
<feature type="chain" id="PRO_0000071494" description="Protein phosphatase 1 regulatory subunit 14C">
    <location>
        <begin position="2"/>
        <end position="165"/>
    </location>
</feature>
<feature type="region of interest" description="Disordered" evidence="3">
    <location>
        <begin position="1"/>
        <end position="73"/>
    </location>
</feature>
<feature type="compositionally biased region" description="Low complexity" evidence="3">
    <location>
        <begin position="1"/>
        <end position="12"/>
    </location>
</feature>
<feature type="compositionally biased region" description="Low complexity" evidence="3">
    <location>
        <begin position="35"/>
        <end position="63"/>
    </location>
</feature>
<feature type="modified residue" description="N-acetylserine" evidence="8 9">
    <location>
        <position position="2"/>
    </location>
</feature>
<feature type="modified residue" description="Phosphoserine" evidence="10">
    <location>
        <position position="25"/>
    </location>
</feature>
<feature type="modified residue" description="Omega-N-methylarginine" evidence="2">
    <location>
        <position position="27"/>
    </location>
</feature>
<feature type="modified residue" description="Phosphoserine" evidence="10">
    <location>
        <position position="33"/>
    </location>
</feature>
<feature type="modified residue" description="Phosphothreonine; by ILK1" evidence="5">
    <location>
        <position position="73"/>
    </location>
</feature>
<feature type="sequence variant" id="VAR_025547" description="In dbSNP:rs2297672." evidence="4 6">
    <original>T</original>
    <variation>A</variation>
    <location>
        <position position="10"/>
    </location>
</feature>
<protein>
    <recommendedName>
        <fullName>Protein phosphatase 1 regulatory subunit 14C</fullName>
    </recommendedName>
    <alternativeName>
        <fullName>Kinase-enhanced PP1 inhibitor</fullName>
    </alternativeName>
    <alternativeName>
        <fullName>PKC-potentiated PP1 inhibitory protein</fullName>
    </alternativeName>
    <alternativeName>
        <fullName>Serologically defined breast cancer antigen NY-BR-81</fullName>
    </alternativeName>
</protein>
<organism>
    <name type="scientific">Homo sapiens</name>
    <name type="common">Human</name>
    <dbReference type="NCBI Taxonomy" id="9606"/>
    <lineage>
        <taxon>Eukaryota</taxon>
        <taxon>Metazoa</taxon>
        <taxon>Chordata</taxon>
        <taxon>Craniata</taxon>
        <taxon>Vertebrata</taxon>
        <taxon>Euteleostomi</taxon>
        <taxon>Mammalia</taxon>
        <taxon>Eutheria</taxon>
        <taxon>Euarchontoglires</taxon>
        <taxon>Primates</taxon>
        <taxon>Haplorrhini</taxon>
        <taxon>Catarrhini</taxon>
        <taxon>Hominidae</taxon>
        <taxon>Homo</taxon>
    </lineage>
</organism>
<evidence type="ECO:0000250" key="1"/>
<evidence type="ECO:0000250" key="2">
    <source>
        <dbReference type="UniProtKB" id="Q8R4S0"/>
    </source>
</evidence>
<evidence type="ECO:0000256" key="3">
    <source>
        <dbReference type="SAM" id="MobiDB-lite"/>
    </source>
</evidence>
<evidence type="ECO:0000269" key="4">
    <source>
    </source>
</evidence>
<evidence type="ECO:0000269" key="5">
    <source>
    </source>
</evidence>
<evidence type="ECO:0000269" key="6">
    <source>
    </source>
</evidence>
<evidence type="ECO:0000305" key="7"/>
<evidence type="ECO:0007744" key="8">
    <source>
    </source>
</evidence>
<evidence type="ECO:0007744" key="9">
    <source>
    </source>
</evidence>
<evidence type="ECO:0007744" key="10">
    <source>
    </source>
</evidence>
<dbReference type="EMBL" id="AF308297">
    <property type="protein sequence ID" value="AAG48264.1"/>
    <property type="status" value="ALT_INIT"/>
    <property type="molecule type" value="mRNA"/>
</dbReference>
<dbReference type="EMBL" id="AF407165">
    <property type="protein sequence ID" value="AAL83506.1"/>
    <property type="molecule type" value="mRNA"/>
</dbReference>
<dbReference type="EMBL" id="AF407166">
    <property type="protein sequence ID" value="AAL83507.1"/>
    <property type="molecule type" value="Genomic_DNA"/>
</dbReference>
<dbReference type="EMBL" id="AL355497">
    <property type="status" value="NOT_ANNOTATED_CDS"/>
    <property type="molecule type" value="Genomic_DNA"/>
</dbReference>
<dbReference type="EMBL" id="AL096708">
    <property type="status" value="NOT_ANNOTATED_CDS"/>
    <property type="molecule type" value="Genomic_DNA"/>
</dbReference>
<dbReference type="EMBL" id="BC015773">
    <property type="protein sequence ID" value="AAH15773.1"/>
    <property type="molecule type" value="mRNA"/>
</dbReference>
<dbReference type="CCDS" id="CCDS5226.1"/>
<dbReference type="RefSeq" id="NP_112211.1">
    <property type="nucleotide sequence ID" value="NM_030949.3"/>
</dbReference>
<dbReference type="BioGRID" id="123578">
    <property type="interactions" value="15"/>
</dbReference>
<dbReference type="FunCoup" id="Q8TAE6">
    <property type="interactions" value="118"/>
</dbReference>
<dbReference type="IntAct" id="Q8TAE6">
    <property type="interactions" value="4"/>
</dbReference>
<dbReference type="STRING" id="9606.ENSP00000355260"/>
<dbReference type="iPTMnet" id="Q8TAE6"/>
<dbReference type="PhosphoSitePlus" id="Q8TAE6"/>
<dbReference type="BioMuta" id="PPP1R14C"/>
<dbReference type="DMDM" id="90110047"/>
<dbReference type="jPOST" id="Q8TAE6"/>
<dbReference type="MassIVE" id="Q8TAE6"/>
<dbReference type="PaxDb" id="9606-ENSP00000355260"/>
<dbReference type="PeptideAtlas" id="Q8TAE6"/>
<dbReference type="ProteomicsDB" id="73866"/>
<dbReference type="Pumba" id="Q8TAE6"/>
<dbReference type="Antibodypedia" id="54632">
    <property type="antibodies" value="107 antibodies from 24 providers"/>
</dbReference>
<dbReference type="DNASU" id="81706"/>
<dbReference type="Ensembl" id="ENST00000361131.5">
    <property type="protein sequence ID" value="ENSP00000355260.4"/>
    <property type="gene ID" value="ENSG00000198729.5"/>
</dbReference>
<dbReference type="GeneID" id="81706"/>
<dbReference type="KEGG" id="hsa:81706"/>
<dbReference type="MANE-Select" id="ENST00000361131.5">
    <property type="protein sequence ID" value="ENSP00000355260.4"/>
    <property type="RefSeq nucleotide sequence ID" value="NM_030949.3"/>
    <property type="RefSeq protein sequence ID" value="NP_112211.1"/>
</dbReference>
<dbReference type="UCSC" id="uc003qnt.4">
    <property type="organism name" value="human"/>
</dbReference>
<dbReference type="AGR" id="HGNC:14952"/>
<dbReference type="CTD" id="81706"/>
<dbReference type="DisGeNET" id="81706"/>
<dbReference type="GeneCards" id="PPP1R14C"/>
<dbReference type="HGNC" id="HGNC:14952">
    <property type="gene designation" value="PPP1R14C"/>
</dbReference>
<dbReference type="HPA" id="ENSG00000198729">
    <property type="expression patterns" value="Tissue enhanced (heart muscle, skeletal muscle, skin, thyroid gland)"/>
</dbReference>
<dbReference type="MIM" id="613242">
    <property type="type" value="gene"/>
</dbReference>
<dbReference type="neXtProt" id="NX_Q8TAE6"/>
<dbReference type="OpenTargets" id="ENSG00000198729"/>
<dbReference type="PharmGKB" id="PA33630"/>
<dbReference type="VEuPathDB" id="HostDB:ENSG00000198729"/>
<dbReference type="eggNOG" id="ENOG502RYQF">
    <property type="taxonomic scope" value="Eukaryota"/>
</dbReference>
<dbReference type="GeneTree" id="ENSGT00950000182985"/>
<dbReference type="HOGENOM" id="CLU_114155_1_0_1"/>
<dbReference type="InParanoid" id="Q8TAE6"/>
<dbReference type="OMA" id="PARVFFQ"/>
<dbReference type="OrthoDB" id="8193882at2759"/>
<dbReference type="PAN-GO" id="Q8TAE6">
    <property type="GO annotations" value="1 GO annotation based on evolutionary models"/>
</dbReference>
<dbReference type="PhylomeDB" id="Q8TAE6"/>
<dbReference type="TreeFam" id="TF105546"/>
<dbReference type="PathwayCommons" id="Q8TAE6"/>
<dbReference type="SignaLink" id="Q8TAE6"/>
<dbReference type="SIGNOR" id="Q8TAE6"/>
<dbReference type="BioGRID-ORCS" id="81706">
    <property type="hits" value="8 hits in 1161 CRISPR screens"/>
</dbReference>
<dbReference type="ChiTaRS" id="PPP1R14C">
    <property type="organism name" value="human"/>
</dbReference>
<dbReference type="GeneWiki" id="PPP1R14C"/>
<dbReference type="GenomeRNAi" id="81706"/>
<dbReference type="Pharos" id="Q8TAE6">
    <property type="development level" value="Tbio"/>
</dbReference>
<dbReference type="PRO" id="PR:Q8TAE6"/>
<dbReference type="Proteomes" id="UP000005640">
    <property type="component" value="Chromosome 6"/>
</dbReference>
<dbReference type="RNAct" id="Q8TAE6">
    <property type="molecule type" value="protein"/>
</dbReference>
<dbReference type="Bgee" id="ENSG00000198729">
    <property type="expression patterns" value="Expressed in upper arm skin and 169 other cell types or tissues"/>
</dbReference>
<dbReference type="GO" id="GO:0005737">
    <property type="term" value="C:cytoplasm"/>
    <property type="evidence" value="ECO:0007669"/>
    <property type="project" value="UniProtKB-SubCell"/>
</dbReference>
<dbReference type="GO" id="GO:0016020">
    <property type="term" value="C:membrane"/>
    <property type="evidence" value="ECO:0007669"/>
    <property type="project" value="UniProtKB-SubCell"/>
</dbReference>
<dbReference type="GO" id="GO:0004865">
    <property type="term" value="F:protein serine/threonine phosphatase inhibitor activity"/>
    <property type="evidence" value="ECO:0000318"/>
    <property type="project" value="GO_Central"/>
</dbReference>
<dbReference type="FunFam" id="1.10.150.220:FF:000001">
    <property type="entry name" value="Phosphatase 1, regulatory (Inhibitor) subunit 14C"/>
    <property type="match status" value="1"/>
</dbReference>
<dbReference type="Gene3D" id="1.10.150.220">
    <property type="entry name" value="CPI-17"/>
    <property type="match status" value="1"/>
</dbReference>
<dbReference type="InterPro" id="IPR008025">
    <property type="entry name" value="CPI-17"/>
</dbReference>
<dbReference type="InterPro" id="IPR036658">
    <property type="entry name" value="CPI-17_sf"/>
</dbReference>
<dbReference type="PANTHER" id="PTHR16188">
    <property type="entry name" value="PROTEIN PHOSPHATASE 1 INHIBITOR POTENTIATED BY PROTEIN KINASE C"/>
    <property type="match status" value="1"/>
</dbReference>
<dbReference type="PANTHER" id="PTHR16188:SF6">
    <property type="entry name" value="PROTEIN PHOSPHATASE 1 REGULATORY SUBUNIT 14C"/>
    <property type="match status" value="1"/>
</dbReference>
<dbReference type="Pfam" id="PF05361">
    <property type="entry name" value="PP1_inhibitor"/>
    <property type="match status" value="1"/>
</dbReference>
<dbReference type="SUPFAM" id="SSF81790">
    <property type="entry name" value="Myosin phosphatase inhibitor 17kDa protein, CPI-17"/>
    <property type="match status" value="1"/>
</dbReference>
<sequence length="165" mass="17843">MSVATGSSETAGGASGGGARVFFQSPRGGAGGSPGSSSGSGSSREDSAPVATAAAAGQVQQQQQRRHQQGKVTVKYDRKELRKRLVLEEWIVEQLGQLYGCEEEEMPEVEIDIDDLLDADSDEERASKLQEALVDCYKPTEEFIKELLSRIRGMRKLSPPQKKSV</sequence>
<name>PP14C_HUMAN</name>
<proteinExistence type="evidence at protein level"/>
<comment type="function">
    <text>Inhibitor of the PP1 regulatory subunit PPP1CA.</text>
</comment>
<comment type="subcellular location">
    <subcellularLocation>
        <location evidence="1">Cytoplasm</location>
    </subcellularLocation>
    <subcellularLocation>
        <location evidence="1">Membrane</location>
        <topology evidence="1">Peripheral membrane protein</topology>
    </subcellularLocation>
</comment>
<comment type="tissue specificity">
    <text evidence="4">Detected in breast cancer.</text>
</comment>
<comment type="PTM">
    <text evidence="1 5">Has over 600-fold higher inhibitory activity when phosphorylated, creating a molecular switch for regulating the phosphorylation status of PPP1CA substrates and smooth muscle contraction (By similarity). The main inhibitory site appears to be Thr-73.</text>
</comment>
<comment type="similarity">
    <text evidence="7">Belongs to the PP1 inhibitor family.</text>
</comment>
<comment type="sequence caution" evidence="7">
    <conflict type="erroneous initiation">
        <sequence resource="EMBL-CDS" id="AAG48264"/>
    </conflict>
</comment>